<organism>
    <name type="scientific">Neisseria meningitidis serogroup B (strain ATCC BAA-335 / MC58)</name>
    <dbReference type="NCBI Taxonomy" id="122586"/>
    <lineage>
        <taxon>Bacteria</taxon>
        <taxon>Pseudomonadati</taxon>
        <taxon>Pseudomonadota</taxon>
        <taxon>Betaproteobacteria</taxon>
        <taxon>Neisseriales</taxon>
        <taxon>Neisseriaceae</taxon>
        <taxon>Neisseria</taxon>
    </lineage>
</organism>
<reference key="1">
    <citation type="journal article" date="2000" name="Science">
        <title>Complete genome sequence of Neisseria meningitidis serogroup B strain MC58.</title>
        <authorList>
            <person name="Tettelin H."/>
            <person name="Saunders N.J."/>
            <person name="Heidelberg J.F."/>
            <person name="Jeffries A.C."/>
            <person name="Nelson K.E."/>
            <person name="Eisen J.A."/>
            <person name="Ketchum K.A."/>
            <person name="Hood D.W."/>
            <person name="Peden J.F."/>
            <person name="Dodson R.J."/>
            <person name="Nelson W.C."/>
            <person name="Gwinn M.L."/>
            <person name="DeBoy R.T."/>
            <person name="Peterson J.D."/>
            <person name="Hickey E.K."/>
            <person name="Haft D.H."/>
            <person name="Salzberg S.L."/>
            <person name="White O."/>
            <person name="Fleischmann R.D."/>
            <person name="Dougherty B.A."/>
            <person name="Mason T.M."/>
            <person name="Ciecko A."/>
            <person name="Parksey D.S."/>
            <person name="Blair E."/>
            <person name="Cittone H."/>
            <person name="Clark E.B."/>
            <person name="Cotton M.D."/>
            <person name="Utterback T.R."/>
            <person name="Khouri H.M."/>
            <person name="Qin H."/>
            <person name="Vamathevan J.J."/>
            <person name="Gill J."/>
            <person name="Scarlato V."/>
            <person name="Masignani V."/>
            <person name="Pizza M."/>
            <person name="Grandi G."/>
            <person name="Sun L."/>
            <person name="Smith H.O."/>
            <person name="Fraser C.M."/>
            <person name="Moxon E.R."/>
            <person name="Rappuoli R."/>
            <person name="Venter J.C."/>
        </authorList>
    </citation>
    <scope>NUCLEOTIDE SEQUENCE [LARGE SCALE GENOMIC DNA]</scope>
    <source>
        <strain>ATCC BAA-335 / MC58</strain>
    </source>
</reference>
<feature type="chain" id="PRO_0000207230" description="Leucyl/phenylalanyl-tRNA--protein transferase">
    <location>
        <begin position="1"/>
        <end position="241"/>
    </location>
</feature>
<sequence length="241" mass="26836">MRIPLLAPDNYAFPDPAYALARCDGLVGVSGDLDAGRLLEAYRNGVFPWFSRDGWFFWYAVGPRAVVFPDRLHIPRSLAKTLRNGSYRVAVNGCFAEVVAHCAAAARPNQDGTWIAPEFQTAYLKLHEMGYAHSFECHYPDESGETRLAGGFYGVQIGRVFYGESMFALQPDASKIAFACAVPFLADLGVELIDCQQDTEHMRRFGSELLPFADFAERLRMLNAVPLKEEIGRREVACKGL</sequence>
<name>LFTR_NEIMB</name>
<dbReference type="EC" id="2.3.2.6" evidence="1"/>
<dbReference type="EMBL" id="AE002098">
    <property type="protein sequence ID" value="AAF40663.1"/>
    <property type="molecule type" value="Genomic_DNA"/>
</dbReference>
<dbReference type="PIR" id="H81226">
    <property type="entry name" value="H81226"/>
</dbReference>
<dbReference type="RefSeq" id="NP_273264.1">
    <property type="nucleotide sequence ID" value="NC_003112.2"/>
</dbReference>
<dbReference type="RefSeq" id="WP_002236619.1">
    <property type="nucleotide sequence ID" value="NC_003112.2"/>
</dbReference>
<dbReference type="SMR" id="Q9K1E9"/>
<dbReference type="FunCoup" id="Q9K1E9">
    <property type="interactions" value="267"/>
</dbReference>
<dbReference type="STRING" id="122586.NMB0206"/>
<dbReference type="PaxDb" id="122586-NMB0206"/>
<dbReference type="KEGG" id="nme:NMB0206"/>
<dbReference type="PATRIC" id="fig|122586.8.peg.255"/>
<dbReference type="HOGENOM" id="CLU_075045_0_0_4"/>
<dbReference type="InParanoid" id="Q9K1E9"/>
<dbReference type="OrthoDB" id="9790282at2"/>
<dbReference type="Proteomes" id="UP000000425">
    <property type="component" value="Chromosome"/>
</dbReference>
<dbReference type="GO" id="GO:0005737">
    <property type="term" value="C:cytoplasm"/>
    <property type="evidence" value="ECO:0000318"/>
    <property type="project" value="GO_Central"/>
</dbReference>
<dbReference type="GO" id="GO:0008914">
    <property type="term" value="F:leucyl-tRNA--protein transferase activity"/>
    <property type="evidence" value="ECO:0000318"/>
    <property type="project" value="GO_Central"/>
</dbReference>
<dbReference type="GO" id="GO:0030163">
    <property type="term" value="P:protein catabolic process"/>
    <property type="evidence" value="ECO:0007669"/>
    <property type="project" value="UniProtKB-UniRule"/>
</dbReference>
<dbReference type="FunFam" id="3.40.630.70:FF:000004">
    <property type="entry name" value="Leucyl/phenylalanyl-tRNA--protein transferase"/>
    <property type="match status" value="1"/>
</dbReference>
<dbReference type="Gene3D" id="3.40.630.70">
    <property type="entry name" value="Leucyl/phenylalanyl-tRNA-protein transferase, C-terminal domain"/>
    <property type="match status" value="1"/>
</dbReference>
<dbReference type="Gene3D" id="3.30.70.3550">
    <property type="entry name" value="Leucyl/phenylalanyl-tRNA-protein transferase, N-terminal domain"/>
    <property type="match status" value="1"/>
</dbReference>
<dbReference type="HAMAP" id="MF_00688">
    <property type="entry name" value="Leu_Phe_trans"/>
    <property type="match status" value="1"/>
</dbReference>
<dbReference type="InterPro" id="IPR016181">
    <property type="entry name" value="Acyl_CoA_acyltransferase"/>
</dbReference>
<dbReference type="InterPro" id="IPR004616">
    <property type="entry name" value="Leu/Phe-tRNA_Trfase"/>
</dbReference>
<dbReference type="InterPro" id="IPR042203">
    <property type="entry name" value="Leu/Phe-tRNA_Trfase_C"/>
</dbReference>
<dbReference type="InterPro" id="IPR042221">
    <property type="entry name" value="Leu/Phe-tRNA_Trfase_N"/>
</dbReference>
<dbReference type="NCBIfam" id="TIGR00667">
    <property type="entry name" value="aat"/>
    <property type="match status" value="1"/>
</dbReference>
<dbReference type="PANTHER" id="PTHR30098">
    <property type="entry name" value="LEUCYL/PHENYLALANYL-TRNA--PROTEIN TRANSFERASE"/>
    <property type="match status" value="1"/>
</dbReference>
<dbReference type="PANTHER" id="PTHR30098:SF2">
    <property type="entry name" value="LEUCYL_PHENYLALANYL-TRNA--PROTEIN TRANSFERASE"/>
    <property type="match status" value="1"/>
</dbReference>
<dbReference type="Pfam" id="PF03588">
    <property type="entry name" value="Leu_Phe_trans"/>
    <property type="match status" value="1"/>
</dbReference>
<dbReference type="SUPFAM" id="SSF55729">
    <property type="entry name" value="Acyl-CoA N-acyltransferases (Nat)"/>
    <property type="match status" value="1"/>
</dbReference>
<comment type="function">
    <text evidence="1">Functions in the N-end rule pathway of protein degradation where it conjugates Leu, Phe and, less efficiently, Met from aminoacyl-tRNAs to the N-termini of proteins containing an N-terminal arginine or lysine.</text>
</comment>
<comment type="catalytic activity">
    <reaction evidence="1">
        <text>N-terminal L-lysyl-[protein] + L-leucyl-tRNA(Leu) = N-terminal L-leucyl-L-lysyl-[protein] + tRNA(Leu) + H(+)</text>
        <dbReference type="Rhea" id="RHEA:12340"/>
        <dbReference type="Rhea" id="RHEA-COMP:9613"/>
        <dbReference type="Rhea" id="RHEA-COMP:9622"/>
        <dbReference type="Rhea" id="RHEA-COMP:12670"/>
        <dbReference type="Rhea" id="RHEA-COMP:12671"/>
        <dbReference type="ChEBI" id="CHEBI:15378"/>
        <dbReference type="ChEBI" id="CHEBI:65249"/>
        <dbReference type="ChEBI" id="CHEBI:78442"/>
        <dbReference type="ChEBI" id="CHEBI:78494"/>
        <dbReference type="ChEBI" id="CHEBI:133043"/>
        <dbReference type="EC" id="2.3.2.6"/>
    </reaction>
</comment>
<comment type="catalytic activity">
    <reaction evidence="1">
        <text>N-terminal L-arginyl-[protein] + L-leucyl-tRNA(Leu) = N-terminal L-leucyl-L-arginyl-[protein] + tRNA(Leu) + H(+)</text>
        <dbReference type="Rhea" id="RHEA:50416"/>
        <dbReference type="Rhea" id="RHEA-COMP:9613"/>
        <dbReference type="Rhea" id="RHEA-COMP:9622"/>
        <dbReference type="Rhea" id="RHEA-COMP:12672"/>
        <dbReference type="Rhea" id="RHEA-COMP:12673"/>
        <dbReference type="ChEBI" id="CHEBI:15378"/>
        <dbReference type="ChEBI" id="CHEBI:64719"/>
        <dbReference type="ChEBI" id="CHEBI:78442"/>
        <dbReference type="ChEBI" id="CHEBI:78494"/>
        <dbReference type="ChEBI" id="CHEBI:133044"/>
        <dbReference type="EC" id="2.3.2.6"/>
    </reaction>
</comment>
<comment type="catalytic activity">
    <reaction evidence="1">
        <text>L-phenylalanyl-tRNA(Phe) + an N-terminal L-alpha-aminoacyl-[protein] = an N-terminal L-phenylalanyl-L-alpha-aminoacyl-[protein] + tRNA(Phe)</text>
        <dbReference type="Rhea" id="RHEA:43632"/>
        <dbReference type="Rhea" id="RHEA-COMP:9668"/>
        <dbReference type="Rhea" id="RHEA-COMP:9699"/>
        <dbReference type="Rhea" id="RHEA-COMP:10636"/>
        <dbReference type="Rhea" id="RHEA-COMP:10637"/>
        <dbReference type="ChEBI" id="CHEBI:78442"/>
        <dbReference type="ChEBI" id="CHEBI:78531"/>
        <dbReference type="ChEBI" id="CHEBI:78597"/>
        <dbReference type="ChEBI" id="CHEBI:83561"/>
        <dbReference type="EC" id="2.3.2.6"/>
    </reaction>
</comment>
<comment type="subcellular location">
    <subcellularLocation>
        <location evidence="1">Cytoplasm</location>
    </subcellularLocation>
</comment>
<comment type="similarity">
    <text evidence="1">Belongs to the L/F-transferase family.</text>
</comment>
<gene>
    <name evidence="1" type="primary">aat</name>
    <name type="ordered locus">NMB0206</name>
</gene>
<proteinExistence type="inferred from homology"/>
<keyword id="KW-0012">Acyltransferase</keyword>
<keyword id="KW-0963">Cytoplasm</keyword>
<keyword id="KW-1185">Reference proteome</keyword>
<keyword id="KW-0808">Transferase</keyword>
<accession>Q9K1E9</accession>
<protein>
    <recommendedName>
        <fullName evidence="1">Leucyl/phenylalanyl-tRNA--protein transferase</fullName>
        <ecNumber evidence="1">2.3.2.6</ecNumber>
    </recommendedName>
    <alternativeName>
        <fullName evidence="1">L/F-transferase</fullName>
    </alternativeName>
    <alternativeName>
        <fullName evidence="1">Leucyltransferase</fullName>
    </alternativeName>
    <alternativeName>
        <fullName evidence="1">Phenyalanyltransferase</fullName>
    </alternativeName>
</protein>
<evidence type="ECO:0000255" key="1">
    <source>
        <dbReference type="HAMAP-Rule" id="MF_00688"/>
    </source>
</evidence>